<evidence type="ECO:0000255" key="1">
    <source>
        <dbReference type="HAMAP-Rule" id="MF_00456"/>
    </source>
</evidence>
<accession>Q4FP45</accession>
<comment type="function">
    <text evidence="1">Catalyzes the transfer of a phosphate group to glutamate to form L-glutamate 5-phosphate.</text>
</comment>
<comment type="catalytic activity">
    <reaction evidence="1">
        <text>L-glutamate + ATP = L-glutamyl 5-phosphate + ADP</text>
        <dbReference type="Rhea" id="RHEA:14877"/>
        <dbReference type="ChEBI" id="CHEBI:29985"/>
        <dbReference type="ChEBI" id="CHEBI:30616"/>
        <dbReference type="ChEBI" id="CHEBI:58274"/>
        <dbReference type="ChEBI" id="CHEBI:456216"/>
        <dbReference type="EC" id="2.7.2.11"/>
    </reaction>
</comment>
<comment type="pathway">
    <text evidence="1">Amino-acid biosynthesis; L-proline biosynthesis; L-glutamate 5-semialdehyde from L-glutamate: step 1/2.</text>
</comment>
<comment type="subcellular location">
    <subcellularLocation>
        <location evidence="1">Cytoplasm</location>
    </subcellularLocation>
</comment>
<comment type="similarity">
    <text evidence="1">Belongs to the glutamate 5-kinase family.</text>
</comment>
<gene>
    <name evidence="1" type="primary">proB</name>
    <name type="ordered locus">SAR11_0223</name>
</gene>
<name>PROB_PELUB</name>
<proteinExistence type="inferred from homology"/>
<reference key="1">
    <citation type="journal article" date="2005" name="Science">
        <title>Genome streamlining in a cosmopolitan oceanic bacterium.</title>
        <authorList>
            <person name="Giovannoni S.J."/>
            <person name="Tripp H.J."/>
            <person name="Givan S."/>
            <person name="Podar M."/>
            <person name="Vergin K.L."/>
            <person name="Baptista D."/>
            <person name="Bibbs L."/>
            <person name="Eads J."/>
            <person name="Richardson T.H."/>
            <person name="Noordewier M."/>
            <person name="Rappe M.S."/>
            <person name="Short J.M."/>
            <person name="Carrington J.C."/>
            <person name="Mathur E.J."/>
        </authorList>
    </citation>
    <scope>NUCLEOTIDE SEQUENCE [LARGE SCALE GENOMIC DNA]</scope>
    <source>
        <strain>HTCC1062</strain>
    </source>
</reference>
<dbReference type="EC" id="2.7.2.11" evidence="1"/>
<dbReference type="EMBL" id="CP000084">
    <property type="protein sequence ID" value="AAZ21044.1"/>
    <property type="molecule type" value="Genomic_DNA"/>
</dbReference>
<dbReference type="RefSeq" id="WP_006997687.1">
    <property type="nucleotide sequence ID" value="NC_007205.1"/>
</dbReference>
<dbReference type="SMR" id="Q4FP45"/>
<dbReference type="STRING" id="335992.SAR11_0223"/>
<dbReference type="GeneID" id="66294720"/>
<dbReference type="KEGG" id="pub:SAR11_0223"/>
<dbReference type="eggNOG" id="COG0263">
    <property type="taxonomic scope" value="Bacteria"/>
</dbReference>
<dbReference type="HOGENOM" id="CLU_025400_2_0_5"/>
<dbReference type="OrthoDB" id="9804434at2"/>
<dbReference type="UniPathway" id="UPA00098">
    <property type="reaction ID" value="UER00359"/>
</dbReference>
<dbReference type="Proteomes" id="UP000002528">
    <property type="component" value="Chromosome"/>
</dbReference>
<dbReference type="GO" id="GO:0005829">
    <property type="term" value="C:cytosol"/>
    <property type="evidence" value="ECO:0007669"/>
    <property type="project" value="TreeGrafter"/>
</dbReference>
<dbReference type="GO" id="GO:0005524">
    <property type="term" value="F:ATP binding"/>
    <property type="evidence" value="ECO:0007669"/>
    <property type="project" value="UniProtKB-KW"/>
</dbReference>
<dbReference type="GO" id="GO:0004349">
    <property type="term" value="F:glutamate 5-kinase activity"/>
    <property type="evidence" value="ECO:0007669"/>
    <property type="project" value="UniProtKB-UniRule"/>
</dbReference>
<dbReference type="GO" id="GO:0003723">
    <property type="term" value="F:RNA binding"/>
    <property type="evidence" value="ECO:0007669"/>
    <property type="project" value="InterPro"/>
</dbReference>
<dbReference type="GO" id="GO:0055129">
    <property type="term" value="P:L-proline biosynthetic process"/>
    <property type="evidence" value="ECO:0007669"/>
    <property type="project" value="UniProtKB-UniRule"/>
</dbReference>
<dbReference type="CDD" id="cd04242">
    <property type="entry name" value="AAK_G5K_ProB"/>
    <property type="match status" value="1"/>
</dbReference>
<dbReference type="CDD" id="cd21157">
    <property type="entry name" value="PUA_G5K"/>
    <property type="match status" value="1"/>
</dbReference>
<dbReference type="FunFam" id="2.30.130.10:FF:000007">
    <property type="entry name" value="Glutamate 5-kinase"/>
    <property type="match status" value="1"/>
</dbReference>
<dbReference type="FunFam" id="3.40.1160.10:FF:000018">
    <property type="entry name" value="Glutamate 5-kinase"/>
    <property type="match status" value="1"/>
</dbReference>
<dbReference type="Gene3D" id="3.40.1160.10">
    <property type="entry name" value="Acetylglutamate kinase-like"/>
    <property type="match status" value="1"/>
</dbReference>
<dbReference type="Gene3D" id="2.30.130.10">
    <property type="entry name" value="PUA domain"/>
    <property type="match status" value="1"/>
</dbReference>
<dbReference type="HAMAP" id="MF_00456">
    <property type="entry name" value="ProB"/>
    <property type="match status" value="1"/>
</dbReference>
<dbReference type="InterPro" id="IPR036393">
    <property type="entry name" value="AceGlu_kinase-like_sf"/>
</dbReference>
<dbReference type="InterPro" id="IPR001048">
    <property type="entry name" value="Asp/Glu/Uridylate_kinase"/>
</dbReference>
<dbReference type="InterPro" id="IPR041739">
    <property type="entry name" value="G5K_ProB"/>
</dbReference>
<dbReference type="InterPro" id="IPR001057">
    <property type="entry name" value="Glu/AcGlu_kinase"/>
</dbReference>
<dbReference type="InterPro" id="IPR011529">
    <property type="entry name" value="Glu_5kinase"/>
</dbReference>
<dbReference type="InterPro" id="IPR005715">
    <property type="entry name" value="Glu_5kinase/COase_Synthase"/>
</dbReference>
<dbReference type="InterPro" id="IPR019797">
    <property type="entry name" value="Glutamate_5-kinase_CS"/>
</dbReference>
<dbReference type="InterPro" id="IPR002478">
    <property type="entry name" value="PUA"/>
</dbReference>
<dbReference type="InterPro" id="IPR015947">
    <property type="entry name" value="PUA-like_sf"/>
</dbReference>
<dbReference type="InterPro" id="IPR036974">
    <property type="entry name" value="PUA_sf"/>
</dbReference>
<dbReference type="NCBIfam" id="TIGR01027">
    <property type="entry name" value="proB"/>
    <property type="match status" value="1"/>
</dbReference>
<dbReference type="PANTHER" id="PTHR43654">
    <property type="entry name" value="GLUTAMATE 5-KINASE"/>
    <property type="match status" value="1"/>
</dbReference>
<dbReference type="PANTHER" id="PTHR43654:SF1">
    <property type="entry name" value="ISOPENTENYL PHOSPHATE KINASE"/>
    <property type="match status" value="1"/>
</dbReference>
<dbReference type="Pfam" id="PF00696">
    <property type="entry name" value="AA_kinase"/>
    <property type="match status" value="1"/>
</dbReference>
<dbReference type="Pfam" id="PF01472">
    <property type="entry name" value="PUA"/>
    <property type="match status" value="1"/>
</dbReference>
<dbReference type="PIRSF" id="PIRSF000729">
    <property type="entry name" value="GK"/>
    <property type="match status" value="1"/>
</dbReference>
<dbReference type="PRINTS" id="PR00474">
    <property type="entry name" value="GLU5KINASE"/>
</dbReference>
<dbReference type="SMART" id="SM00359">
    <property type="entry name" value="PUA"/>
    <property type="match status" value="1"/>
</dbReference>
<dbReference type="SUPFAM" id="SSF53633">
    <property type="entry name" value="Carbamate kinase-like"/>
    <property type="match status" value="1"/>
</dbReference>
<dbReference type="SUPFAM" id="SSF88697">
    <property type="entry name" value="PUA domain-like"/>
    <property type="match status" value="1"/>
</dbReference>
<dbReference type="PROSITE" id="PS00902">
    <property type="entry name" value="GLUTAMATE_5_KINASE"/>
    <property type="match status" value="1"/>
</dbReference>
<dbReference type="PROSITE" id="PS50890">
    <property type="entry name" value="PUA"/>
    <property type="match status" value="1"/>
</dbReference>
<organism>
    <name type="scientific">Pelagibacter ubique (strain HTCC1062)</name>
    <dbReference type="NCBI Taxonomy" id="335992"/>
    <lineage>
        <taxon>Bacteria</taxon>
        <taxon>Pseudomonadati</taxon>
        <taxon>Pseudomonadota</taxon>
        <taxon>Alphaproteobacteria</taxon>
        <taxon>Candidatus Pelagibacterales</taxon>
        <taxon>Candidatus Pelagibacteraceae</taxon>
        <taxon>Candidatus Pelagibacter</taxon>
    </lineage>
</organism>
<protein>
    <recommendedName>
        <fullName evidence="1">Glutamate 5-kinase</fullName>
        <ecNumber evidence="1">2.7.2.11</ecNumber>
    </recommendedName>
    <alternativeName>
        <fullName evidence="1">Gamma-glutamyl kinase</fullName>
        <shortName evidence="1">GK</shortName>
    </alternativeName>
</protein>
<feature type="chain" id="PRO_0000230051" description="Glutamate 5-kinase">
    <location>
        <begin position="1"/>
        <end position="368"/>
    </location>
</feature>
<feature type="domain" description="PUA" evidence="1">
    <location>
        <begin position="277"/>
        <end position="354"/>
    </location>
</feature>
<feature type="binding site" evidence="1">
    <location>
        <position position="12"/>
    </location>
    <ligand>
        <name>ATP</name>
        <dbReference type="ChEBI" id="CHEBI:30616"/>
    </ligand>
</feature>
<feature type="binding site" evidence="1">
    <location>
        <position position="52"/>
    </location>
    <ligand>
        <name>substrate</name>
    </ligand>
</feature>
<feature type="binding site" evidence="1">
    <location>
        <position position="139"/>
    </location>
    <ligand>
        <name>substrate</name>
    </ligand>
</feature>
<feature type="binding site" evidence="1">
    <location>
        <position position="151"/>
    </location>
    <ligand>
        <name>substrate</name>
    </ligand>
</feature>
<feature type="binding site" evidence="1">
    <location>
        <begin position="171"/>
        <end position="172"/>
    </location>
    <ligand>
        <name>ATP</name>
        <dbReference type="ChEBI" id="CHEBI:30616"/>
    </ligand>
</feature>
<feature type="binding site" evidence="1">
    <location>
        <begin position="213"/>
        <end position="219"/>
    </location>
    <ligand>
        <name>ATP</name>
        <dbReference type="ChEBI" id="CHEBI:30616"/>
    </ligand>
</feature>
<sequence>MYLKDSKIIVIKIGSSLLIDDKKKVRRKWLTEFAKDIQELIKQNKKVIIVSSGAIAMGCKKLNISKKNLKIDKSQAVASIGQIELMNLFSETFVKLKINISQILLTLEDTEQRRRALNAKRTFDNLFKLGFVPIVNENDTIATSEIKYGDNDRLASRVAQISGADSLILLSDVDGLYTHNPKIYKNAKLIKEIRNIDKDIEKIATKSISEHGTGGMKTKIDAAKICQLSGCQMVIANGLVNRPIKKITEENKCTWFLPKVSKLDARKKWIISSVSPKGALIIDDGAKQALSNGKSLLAAGIKKVSGRFSKGDHIKVLDKNNYECARGLSSFSSNEIEKIMGHHSKEIEKLLGYISKSEVIHKDDIVEV</sequence>
<keyword id="KW-0028">Amino-acid biosynthesis</keyword>
<keyword id="KW-0067">ATP-binding</keyword>
<keyword id="KW-0963">Cytoplasm</keyword>
<keyword id="KW-0418">Kinase</keyword>
<keyword id="KW-0547">Nucleotide-binding</keyword>
<keyword id="KW-0641">Proline biosynthesis</keyword>
<keyword id="KW-1185">Reference proteome</keyword>
<keyword id="KW-0808">Transferase</keyword>